<protein>
    <recommendedName>
        <fullName>ETS-related transcription factor Elf-3</fullName>
    </recommendedName>
    <alternativeName>
        <fullName>E74-like factor 3</fullName>
    </alternativeName>
    <alternativeName>
        <fullName>Epithelial-restricted with serine box</fullName>
    </alternativeName>
    <alternativeName>
        <fullName>Epithelium-restricted Ets protein ESX</fullName>
    </alternativeName>
    <alternativeName>
        <fullName>Epithelium-specific Ets transcription factor 1</fullName>
        <shortName>ESE-1</shortName>
    </alternativeName>
</protein>
<gene>
    <name evidence="19" type="primary">Elf3</name>
    <name type="synonym">Ert</name>
    <name type="synonym">Esx</name>
    <name type="synonym">Jen</name>
</gene>
<comment type="function">
    <text evidence="1 7 8 11 13">Transcriptional activator that binds and transactivates ETS sequences containing the consensus nucleotide core sequence GGA[AT]. Acts synergistically with POU2F3 to transactivate the SPRR2A promoter and with RUNX1 to transactivate the ANGPT1 promoter (By similarity). Also transactivates collagenase, CCL20, CLND7, FLG, KRT8, NOS2, PTGS2, SPRR2B, TGFBR2 and TGM3 promoters. Represses KRT4 promoter activity (By similarity). Involved in mediating vascular inflammation. May play an important role in epithelial cell differentiation and tumorigenesis. May be a critical downstream effector of the ERBB2 signaling pathway (By similarity). May be associated with mammary gland development and involution. Plays an important role in the regulation of transcription with TATA-less promoters in preimplantation embryos, which is essential in preimplantation development.</text>
</comment>
<comment type="subunit">
    <text evidence="1">Interacts with TBP. Interacts with CREBBP and EP300; these act as transcriptional coactivators of ELF3 and positively modulate its function. Interacts with XRCC5/KU86 and XRCC6/KU70; these inhibit the ability of ELF3 to bind DNA and negatively modulate its transcriptional activity. Associated with CLND7 and POU2F3 (By similarity). Interacts with ZNF768 (By similarity).</text>
</comment>
<comment type="subcellular location">
    <subcellularLocation>
        <location evidence="1">Cytoplasm</location>
    </subcellularLocation>
    <subcellularLocation>
        <location evidence="3 10">Nucleus</location>
    </subcellularLocation>
</comment>
<comment type="alternative products">
    <event type="alternative splicing"/>
    <isoform>
        <id>Q3UPW2-1</id>
        <name evidence="9">1</name>
        <sequence type="displayed"/>
    </isoform>
    <isoform>
        <id>Q3UPW2-2</id>
        <name evidence="12">2</name>
        <sequence type="described" ref="VSP_052434"/>
    </isoform>
</comment>
<comment type="tissue specificity">
    <text evidence="6 12">Expressed in small intestine, colon, lung, kidney and uterus. Also expressed in the corneal epithelium and conjunctiva of the developing and adult eye. Not detected in liver, spleen, thymus, brain, heart, skeletal muscle or ovary.</text>
</comment>
<comment type="developmental stage">
    <text evidence="6 13">Expression increases progressively from 7 dpc and is detectable in virgin mammary glands, then shows little if any change during pregnancy and declines to barely detectable levels after 3 days of lactation. Detected from 13.5 dpc in conjunctiva epithelium. In cornea, a weak signal is detected at 16.5 dpc and persists throughout the later stages of development.</text>
</comment>
<comment type="induction">
    <text evidence="6 13">Expression in HC11 cells from midpregnant mouse mammary epithelium increases upon reaching lactogenic competency, and is down-regulated upon exposure to lactogenic hormones that induce milk protein (Beta-casein) expression. Up-regulated upon differentiation in corneal epithelium.</text>
</comment>
<comment type="disruption phenotype">
    <text evidence="8">Mice show about 30% fetal lethality at around 11.5 dpc. Approximately 70% of the mutant progeny are born and display severe alterations in tissue architecture in the small intestine. Elf3-deficient enterocytes express markedly reduced levels of TGFBR2.</text>
</comment>
<comment type="similarity">
    <text evidence="2">Belongs to the ETS family.</text>
</comment>
<organism>
    <name type="scientific">Mus musculus</name>
    <name type="common">Mouse</name>
    <dbReference type="NCBI Taxonomy" id="10090"/>
    <lineage>
        <taxon>Eukaryota</taxon>
        <taxon>Metazoa</taxon>
        <taxon>Chordata</taxon>
        <taxon>Craniata</taxon>
        <taxon>Vertebrata</taxon>
        <taxon>Euteleostomi</taxon>
        <taxon>Mammalia</taxon>
        <taxon>Eutheria</taxon>
        <taxon>Euarchontoglires</taxon>
        <taxon>Glires</taxon>
        <taxon>Rodentia</taxon>
        <taxon>Myomorpha</taxon>
        <taxon>Muroidea</taxon>
        <taxon>Muridae</taxon>
        <taxon>Murinae</taxon>
        <taxon>Mus</taxon>
        <taxon>Mus</taxon>
    </lineage>
</organism>
<name>ELF3_MOUSE</name>
<accession>Q3UPW2</accession>
<accession>B7ZNQ9</accession>
<accession>B9EI01</accession>
<accession>O35275</accession>
<feature type="chain" id="PRO_0000287682" description="ETS-related transcription factor Elf-3">
    <location>
        <begin position="1"/>
        <end position="391"/>
    </location>
</feature>
<feature type="domain" description="PNT" evidence="4">
    <location>
        <begin position="65"/>
        <end position="151"/>
    </location>
</feature>
<feature type="DNA-binding region" description="ETS" evidence="3">
    <location>
        <begin position="293"/>
        <end position="375"/>
    </location>
</feature>
<feature type="region of interest" description="Disordered" evidence="5">
    <location>
        <begin position="200"/>
        <end position="271"/>
    </location>
</feature>
<feature type="compositionally biased region" description="Polar residues" evidence="5">
    <location>
        <begin position="211"/>
        <end position="229"/>
    </location>
</feature>
<feature type="compositionally biased region" description="Basic and acidic residues" evidence="5">
    <location>
        <begin position="242"/>
        <end position="261"/>
    </location>
</feature>
<feature type="compositionally biased region" description="Basic residues" evidence="5">
    <location>
        <begin position="262"/>
        <end position="271"/>
    </location>
</feature>
<feature type="splice variant" id="VSP_052434" description="In isoform 2." evidence="14 15">
    <location>
        <begin position="54"/>
        <end position="73"/>
    </location>
</feature>
<feature type="mutagenesis site" description="Slight reduction in transactivation activity." evidence="7">
    <original>D</original>
    <variation>A</variation>
    <location>
        <position position="153"/>
    </location>
</feature>
<feature type="mutagenesis site" description="Significant loss of transactivation activity." evidence="7">
    <original>L</original>
    <variation>P</variation>
    <location>
        <position position="162"/>
    </location>
</feature>
<feature type="mutagenesis site" description="Abrogates nuclear localization activity." evidence="10">
    <original>KRKR</original>
    <variation>AAAA</variation>
    <location>
        <begin position="264"/>
        <end position="267"/>
    </location>
</feature>
<feature type="mutagenesis site" description="Clear and exclusive nuclear accumulation." evidence="10">
    <original>RPRK</original>
    <variation>APAA</variation>
    <location>
        <begin position="269"/>
        <end position="272"/>
    </location>
</feature>
<feature type="mutagenesis site" description="Abolishes nuclear localization." evidence="10">
    <original>KKK</original>
    <variation>AAA</variation>
    <location>
        <begin position="338"/>
        <end position="340"/>
    </location>
</feature>
<feature type="helix" evidence="20">
    <location>
        <begin position="295"/>
        <end position="303"/>
    </location>
</feature>
<feature type="helix" evidence="20">
    <location>
        <begin position="306"/>
        <end position="308"/>
    </location>
</feature>
<feature type="strand" evidence="20">
    <location>
        <begin position="313"/>
        <end position="317"/>
    </location>
</feature>
<feature type="turn" evidence="20">
    <location>
        <begin position="318"/>
        <end position="321"/>
    </location>
</feature>
<feature type="strand" evidence="20">
    <location>
        <begin position="322"/>
        <end position="327"/>
    </location>
</feature>
<feature type="helix" evidence="20">
    <location>
        <begin position="328"/>
        <end position="338"/>
    </location>
</feature>
<feature type="helix" evidence="20">
    <location>
        <begin position="346"/>
        <end position="354"/>
    </location>
</feature>
<feature type="turn" evidence="20">
    <location>
        <begin position="355"/>
        <end position="360"/>
    </location>
</feature>
<feature type="strand" evidence="20">
    <location>
        <begin position="371"/>
        <end position="374"/>
    </location>
</feature>
<feature type="turn" evidence="20">
    <location>
        <begin position="383"/>
        <end position="385"/>
    </location>
</feature>
<dbReference type="EMBL" id="AF016294">
    <property type="protein sequence ID" value="AAB96585.1"/>
    <property type="molecule type" value="mRNA"/>
</dbReference>
<dbReference type="EMBL" id="AK143135">
    <property type="protein sequence ID" value="BAE25282.1"/>
    <property type="molecule type" value="mRNA"/>
</dbReference>
<dbReference type="EMBL" id="BC138692">
    <property type="protein sequence ID" value="AAI38693.1"/>
    <property type="molecule type" value="mRNA"/>
</dbReference>
<dbReference type="EMBL" id="BC145380">
    <property type="protein sequence ID" value="AAI45381.1"/>
    <property type="molecule type" value="mRNA"/>
</dbReference>
<dbReference type="CCDS" id="CCDS48372.1">
    <molecule id="Q3UPW2-1"/>
</dbReference>
<dbReference type="CCDS" id="CCDS78689.1">
    <molecule id="Q3UPW2-2"/>
</dbReference>
<dbReference type="RefSeq" id="NP_001156603.1">
    <molecule id="Q3UPW2-1"/>
    <property type="nucleotide sequence ID" value="NM_001163131.1"/>
</dbReference>
<dbReference type="RefSeq" id="NP_031947.1">
    <molecule id="Q3UPW2-2"/>
    <property type="nucleotide sequence ID" value="NM_007921.3"/>
</dbReference>
<dbReference type="PDB" id="3JTG">
    <property type="method" value="X-ray"/>
    <property type="resolution" value="2.20 A"/>
    <property type="chains" value="A=289-391"/>
</dbReference>
<dbReference type="PDBsum" id="3JTG"/>
<dbReference type="SMR" id="Q3UPW2"/>
<dbReference type="CORUM" id="Q3UPW2"/>
<dbReference type="FunCoup" id="Q3UPW2">
    <property type="interactions" value="1734"/>
</dbReference>
<dbReference type="STRING" id="10090.ENSMUSP00000003135"/>
<dbReference type="iPTMnet" id="Q3UPW2"/>
<dbReference type="PhosphoSitePlus" id="Q3UPW2"/>
<dbReference type="jPOST" id="Q3UPW2"/>
<dbReference type="PaxDb" id="10090-ENSMUSP00000003135"/>
<dbReference type="PeptideAtlas" id="Q3UPW2"/>
<dbReference type="ProteomicsDB" id="277780">
    <molecule id="Q3UPW2-1"/>
</dbReference>
<dbReference type="ProteomicsDB" id="277781">
    <molecule id="Q3UPW2-2"/>
</dbReference>
<dbReference type="Antibodypedia" id="924">
    <property type="antibodies" value="466 antibodies from 37 providers"/>
</dbReference>
<dbReference type="DNASU" id="13710"/>
<dbReference type="Ensembl" id="ENSMUST00000003135.14">
    <molecule id="Q3UPW2-1"/>
    <property type="protein sequence ID" value="ENSMUSP00000003135.8"/>
    <property type="gene ID" value="ENSMUSG00000003051.14"/>
</dbReference>
<dbReference type="Ensembl" id="ENSMUST00000185752.2">
    <molecule id="Q3UPW2-2"/>
    <property type="protein sequence ID" value="ENSMUSP00000139769.2"/>
    <property type="gene ID" value="ENSMUSG00000003051.14"/>
</dbReference>
<dbReference type="GeneID" id="13710"/>
<dbReference type="KEGG" id="mmu:13710"/>
<dbReference type="UCSC" id="uc007csw.2">
    <molecule id="Q3UPW2-2"/>
    <property type="organism name" value="mouse"/>
</dbReference>
<dbReference type="UCSC" id="uc007csx.2">
    <molecule id="Q3UPW2-1"/>
    <property type="organism name" value="mouse"/>
</dbReference>
<dbReference type="AGR" id="MGI:1101781"/>
<dbReference type="CTD" id="1999"/>
<dbReference type="MGI" id="MGI:1101781">
    <property type="gene designation" value="Elf3"/>
</dbReference>
<dbReference type="VEuPathDB" id="HostDB:ENSMUSG00000003051"/>
<dbReference type="eggNOG" id="KOG3804">
    <property type="taxonomic scope" value="Eukaryota"/>
</dbReference>
<dbReference type="GeneTree" id="ENSGT00940000158955"/>
<dbReference type="HOGENOM" id="CLU_048172_0_0_1"/>
<dbReference type="InParanoid" id="Q3UPW2"/>
<dbReference type="OMA" id="CNCAPEE"/>
<dbReference type="OrthoDB" id="5961210at2759"/>
<dbReference type="PhylomeDB" id="Q3UPW2"/>
<dbReference type="TreeFam" id="TF318679"/>
<dbReference type="Reactome" id="R-MMU-1912408">
    <property type="pathway name" value="Pre-NOTCH Transcription and Translation"/>
</dbReference>
<dbReference type="BioGRID-ORCS" id="13710">
    <property type="hits" value="5 hits in 79 CRISPR screens"/>
</dbReference>
<dbReference type="ChiTaRS" id="Elf3">
    <property type="organism name" value="mouse"/>
</dbReference>
<dbReference type="EvolutionaryTrace" id="Q3UPW2"/>
<dbReference type="PRO" id="PR:Q3UPW2"/>
<dbReference type="Proteomes" id="UP000000589">
    <property type="component" value="Chromosome 1"/>
</dbReference>
<dbReference type="RNAct" id="Q3UPW2">
    <property type="molecule type" value="protein"/>
</dbReference>
<dbReference type="Bgee" id="ENSMUSG00000003051">
    <property type="expression patterns" value="Expressed in substantia propria of cornea and 141 other cell types or tissues"/>
</dbReference>
<dbReference type="GO" id="GO:0005829">
    <property type="term" value="C:cytosol"/>
    <property type="evidence" value="ECO:0007669"/>
    <property type="project" value="Ensembl"/>
</dbReference>
<dbReference type="GO" id="GO:0005794">
    <property type="term" value="C:Golgi apparatus"/>
    <property type="evidence" value="ECO:0007669"/>
    <property type="project" value="Ensembl"/>
</dbReference>
<dbReference type="GO" id="GO:0005654">
    <property type="term" value="C:nucleoplasm"/>
    <property type="evidence" value="ECO:0007669"/>
    <property type="project" value="Ensembl"/>
</dbReference>
<dbReference type="GO" id="GO:0005634">
    <property type="term" value="C:nucleus"/>
    <property type="evidence" value="ECO:0000305"/>
    <property type="project" value="MGI"/>
</dbReference>
<dbReference type="GO" id="GO:0003677">
    <property type="term" value="F:DNA binding"/>
    <property type="evidence" value="ECO:0000314"/>
    <property type="project" value="MGI"/>
</dbReference>
<dbReference type="GO" id="GO:0001228">
    <property type="term" value="F:DNA-binding transcription activator activity, RNA polymerase II-specific"/>
    <property type="evidence" value="ECO:0000314"/>
    <property type="project" value="NTNU_SB"/>
</dbReference>
<dbReference type="GO" id="GO:0003700">
    <property type="term" value="F:DNA-binding transcription factor activity"/>
    <property type="evidence" value="ECO:0000314"/>
    <property type="project" value="MGI"/>
</dbReference>
<dbReference type="GO" id="GO:0000978">
    <property type="term" value="F:RNA polymerase II cis-regulatory region sequence-specific DNA binding"/>
    <property type="evidence" value="ECO:0000314"/>
    <property type="project" value="NTNU_SB"/>
</dbReference>
<dbReference type="GO" id="GO:0009653">
    <property type="term" value="P:anatomical structure morphogenesis"/>
    <property type="evidence" value="ECO:0000315"/>
    <property type="project" value="MGI"/>
</dbReference>
<dbReference type="GO" id="GO:0001824">
    <property type="term" value="P:blastocyst development"/>
    <property type="evidence" value="ECO:0000315"/>
    <property type="project" value="MGI"/>
</dbReference>
<dbReference type="GO" id="GO:0030154">
    <property type="term" value="P:cell differentiation"/>
    <property type="evidence" value="ECO:0007669"/>
    <property type="project" value="UniProtKB-KW"/>
</dbReference>
<dbReference type="GO" id="GO:0030198">
    <property type="term" value="P:extracellular matrix organization"/>
    <property type="evidence" value="ECO:0000315"/>
    <property type="project" value="MGI"/>
</dbReference>
<dbReference type="GO" id="GO:0006954">
    <property type="term" value="P:inflammatory response"/>
    <property type="evidence" value="ECO:0000250"/>
    <property type="project" value="UniProtKB"/>
</dbReference>
<dbReference type="GO" id="GO:0060056">
    <property type="term" value="P:mammary gland involution"/>
    <property type="evidence" value="ECO:0000314"/>
    <property type="project" value="UniProtKB"/>
</dbReference>
<dbReference type="GO" id="GO:0045892">
    <property type="term" value="P:negative regulation of DNA-templated transcription"/>
    <property type="evidence" value="ECO:0000250"/>
    <property type="project" value="UniProtKB"/>
</dbReference>
<dbReference type="GO" id="GO:0045944">
    <property type="term" value="P:positive regulation of transcription by RNA polymerase II"/>
    <property type="evidence" value="ECO:0000314"/>
    <property type="project" value="NTNU_SB"/>
</dbReference>
<dbReference type="GO" id="GO:0006355">
    <property type="term" value="P:regulation of DNA-templated transcription"/>
    <property type="evidence" value="ECO:0000314"/>
    <property type="project" value="MGI"/>
</dbReference>
<dbReference type="CDD" id="cd08537">
    <property type="entry name" value="SAM_PNT-ESE-1-like"/>
    <property type="match status" value="1"/>
</dbReference>
<dbReference type="FunFam" id="1.10.10.10:FF:000136">
    <property type="entry name" value="ETS homologous factor isoform X1"/>
    <property type="match status" value="1"/>
</dbReference>
<dbReference type="FunFam" id="1.10.150.50:FF:000063">
    <property type="entry name" value="ETS-related transcription factor Elf-3 isoform X1"/>
    <property type="match status" value="1"/>
</dbReference>
<dbReference type="Gene3D" id="1.10.150.50">
    <property type="entry name" value="Transcription Factor, Ets-1"/>
    <property type="match status" value="1"/>
</dbReference>
<dbReference type="Gene3D" id="1.10.10.10">
    <property type="entry name" value="Winged helix-like DNA-binding domain superfamily/Winged helix DNA-binding domain"/>
    <property type="match status" value="1"/>
</dbReference>
<dbReference type="InterPro" id="IPR042693">
    <property type="entry name" value="Elf-3_PNT"/>
</dbReference>
<dbReference type="InterPro" id="IPR000418">
    <property type="entry name" value="Ets_dom"/>
</dbReference>
<dbReference type="InterPro" id="IPR046328">
    <property type="entry name" value="ETS_fam"/>
</dbReference>
<dbReference type="InterPro" id="IPR003118">
    <property type="entry name" value="Pointed_dom"/>
</dbReference>
<dbReference type="InterPro" id="IPR013761">
    <property type="entry name" value="SAM/pointed_sf"/>
</dbReference>
<dbReference type="InterPro" id="IPR036388">
    <property type="entry name" value="WH-like_DNA-bd_sf"/>
</dbReference>
<dbReference type="InterPro" id="IPR036390">
    <property type="entry name" value="WH_DNA-bd_sf"/>
</dbReference>
<dbReference type="PANTHER" id="PTHR11849">
    <property type="entry name" value="ETS"/>
    <property type="match status" value="1"/>
</dbReference>
<dbReference type="PANTHER" id="PTHR11849:SF13">
    <property type="entry name" value="ETS-RELATED TRANSCRIPTION FACTOR ELF-3"/>
    <property type="match status" value="1"/>
</dbReference>
<dbReference type="Pfam" id="PF00178">
    <property type="entry name" value="Ets"/>
    <property type="match status" value="1"/>
</dbReference>
<dbReference type="Pfam" id="PF02198">
    <property type="entry name" value="SAM_PNT"/>
    <property type="match status" value="1"/>
</dbReference>
<dbReference type="PRINTS" id="PR00454">
    <property type="entry name" value="ETSDOMAIN"/>
</dbReference>
<dbReference type="SMART" id="SM00413">
    <property type="entry name" value="ETS"/>
    <property type="match status" value="1"/>
</dbReference>
<dbReference type="SMART" id="SM00251">
    <property type="entry name" value="SAM_PNT"/>
    <property type="match status" value="1"/>
</dbReference>
<dbReference type="SUPFAM" id="SSF47769">
    <property type="entry name" value="SAM/Pointed domain"/>
    <property type="match status" value="1"/>
</dbReference>
<dbReference type="SUPFAM" id="SSF46785">
    <property type="entry name" value="Winged helix' DNA-binding domain"/>
    <property type="match status" value="1"/>
</dbReference>
<dbReference type="PROSITE" id="PS50061">
    <property type="entry name" value="ETS_DOMAIN_3"/>
    <property type="match status" value="1"/>
</dbReference>
<dbReference type="PROSITE" id="PS51433">
    <property type="entry name" value="PNT"/>
    <property type="match status" value="1"/>
</dbReference>
<evidence type="ECO:0000250" key="1">
    <source>
        <dbReference type="UniProtKB" id="P78545"/>
    </source>
</evidence>
<evidence type="ECO:0000255" key="2"/>
<evidence type="ECO:0000255" key="3">
    <source>
        <dbReference type="PROSITE-ProRule" id="PRU00237"/>
    </source>
</evidence>
<evidence type="ECO:0000255" key="4">
    <source>
        <dbReference type="PROSITE-ProRule" id="PRU00762"/>
    </source>
</evidence>
<evidence type="ECO:0000256" key="5">
    <source>
        <dbReference type="SAM" id="MobiDB-lite"/>
    </source>
</evidence>
<evidence type="ECO:0000269" key="6">
    <source>
    </source>
</evidence>
<evidence type="ECO:0000269" key="7">
    <source>
    </source>
</evidence>
<evidence type="ECO:0000269" key="8">
    <source>
    </source>
</evidence>
<evidence type="ECO:0000269" key="9">
    <source>
    </source>
</evidence>
<evidence type="ECO:0000269" key="10">
    <source>
    </source>
</evidence>
<evidence type="ECO:0000269" key="11">
    <source>
    </source>
</evidence>
<evidence type="ECO:0000269" key="12">
    <source>
    </source>
</evidence>
<evidence type="ECO:0000269" key="13">
    <source>
    </source>
</evidence>
<evidence type="ECO:0000303" key="14">
    <source>
    </source>
</evidence>
<evidence type="ECO:0000303" key="15">
    <source>
    </source>
</evidence>
<evidence type="ECO:0000305" key="16"/>
<evidence type="ECO:0000312" key="17">
    <source>
        <dbReference type="EMBL" id="AAB96585.1"/>
    </source>
</evidence>
<evidence type="ECO:0000312" key="18">
    <source>
        <dbReference type="EMBL" id="BAE25282.1"/>
    </source>
</evidence>
<evidence type="ECO:0000312" key="19">
    <source>
        <dbReference type="MGI" id="MGI:1101781"/>
    </source>
</evidence>
<evidence type="ECO:0007829" key="20">
    <source>
        <dbReference type="PDB" id="3JTG"/>
    </source>
</evidence>
<reference evidence="16 17" key="1">
    <citation type="journal article" date="1997" name="Oncogene">
        <title>A novel epithelial-expressed ETS gene, ELF3: human and murine cDNA sequences, murine genomic organization, human mapping to 1q32.2 and expression in tissues and cancer.</title>
        <authorList>
            <person name="Tymms M.J."/>
            <person name="Ng A.Y.N."/>
            <person name="Thomas R.S."/>
            <person name="Schutte B.C."/>
            <person name="Zhou J."/>
            <person name="Eyre H.J."/>
            <person name="Sutherland G.R."/>
            <person name="Seth A."/>
            <person name="Rosenberg M."/>
            <person name="Papas T."/>
            <person name="Debouck C."/>
            <person name="Kola I."/>
        </authorList>
    </citation>
    <scope>NUCLEOTIDE SEQUENCE [MRNA] (ISOFORM 2)</scope>
    <scope>TISSUE SPECIFICITY</scope>
    <source>
        <tissue evidence="17">Lung</tissue>
    </source>
</reference>
<reference evidence="16 18" key="2">
    <citation type="journal article" date="2005" name="Science">
        <title>The transcriptional landscape of the mammalian genome.</title>
        <authorList>
            <person name="Carninci P."/>
            <person name="Kasukawa T."/>
            <person name="Katayama S."/>
            <person name="Gough J."/>
            <person name="Frith M.C."/>
            <person name="Maeda N."/>
            <person name="Oyama R."/>
            <person name="Ravasi T."/>
            <person name="Lenhard B."/>
            <person name="Wells C."/>
            <person name="Kodzius R."/>
            <person name="Shimokawa K."/>
            <person name="Bajic V.B."/>
            <person name="Brenner S.E."/>
            <person name="Batalov S."/>
            <person name="Forrest A.R."/>
            <person name="Zavolan M."/>
            <person name="Davis M.J."/>
            <person name="Wilming L.G."/>
            <person name="Aidinis V."/>
            <person name="Allen J.E."/>
            <person name="Ambesi-Impiombato A."/>
            <person name="Apweiler R."/>
            <person name="Aturaliya R.N."/>
            <person name="Bailey T.L."/>
            <person name="Bansal M."/>
            <person name="Baxter L."/>
            <person name="Beisel K.W."/>
            <person name="Bersano T."/>
            <person name="Bono H."/>
            <person name="Chalk A.M."/>
            <person name="Chiu K.P."/>
            <person name="Choudhary V."/>
            <person name="Christoffels A."/>
            <person name="Clutterbuck D.R."/>
            <person name="Crowe M.L."/>
            <person name="Dalla E."/>
            <person name="Dalrymple B.P."/>
            <person name="de Bono B."/>
            <person name="Della Gatta G."/>
            <person name="di Bernardo D."/>
            <person name="Down T."/>
            <person name="Engstrom P."/>
            <person name="Fagiolini M."/>
            <person name="Faulkner G."/>
            <person name="Fletcher C.F."/>
            <person name="Fukushima T."/>
            <person name="Furuno M."/>
            <person name="Futaki S."/>
            <person name="Gariboldi M."/>
            <person name="Georgii-Hemming P."/>
            <person name="Gingeras T.R."/>
            <person name="Gojobori T."/>
            <person name="Green R.E."/>
            <person name="Gustincich S."/>
            <person name="Harbers M."/>
            <person name="Hayashi Y."/>
            <person name="Hensch T.K."/>
            <person name="Hirokawa N."/>
            <person name="Hill D."/>
            <person name="Huminiecki L."/>
            <person name="Iacono M."/>
            <person name="Ikeo K."/>
            <person name="Iwama A."/>
            <person name="Ishikawa T."/>
            <person name="Jakt M."/>
            <person name="Kanapin A."/>
            <person name="Katoh M."/>
            <person name="Kawasawa Y."/>
            <person name="Kelso J."/>
            <person name="Kitamura H."/>
            <person name="Kitano H."/>
            <person name="Kollias G."/>
            <person name="Krishnan S.P."/>
            <person name="Kruger A."/>
            <person name="Kummerfeld S.K."/>
            <person name="Kurochkin I.V."/>
            <person name="Lareau L.F."/>
            <person name="Lazarevic D."/>
            <person name="Lipovich L."/>
            <person name="Liu J."/>
            <person name="Liuni S."/>
            <person name="McWilliam S."/>
            <person name="Madan Babu M."/>
            <person name="Madera M."/>
            <person name="Marchionni L."/>
            <person name="Matsuda H."/>
            <person name="Matsuzawa S."/>
            <person name="Miki H."/>
            <person name="Mignone F."/>
            <person name="Miyake S."/>
            <person name="Morris K."/>
            <person name="Mottagui-Tabar S."/>
            <person name="Mulder N."/>
            <person name="Nakano N."/>
            <person name="Nakauchi H."/>
            <person name="Ng P."/>
            <person name="Nilsson R."/>
            <person name="Nishiguchi S."/>
            <person name="Nishikawa S."/>
            <person name="Nori F."/>
            <person name="Ohara O."/>
            <person name="Okazaki Y."/>
            <person name="Orlando V."/>
            <person name="Pang K.C."/>
            <person name="Pavan W.J."/>
            <person name="Pavesi G."/>
            <person name="Pesole G."/>
            <person name="Petrovsky N."/>
            <person name="Piazza S."/>
            <person name="Reed J."/>
            <person name="Reid J.F."/>
            <person name="Ring B.Z."/>
            <person name="Ringwald M."/>
            <person name="Rost B."/>
            <person name="Ruan Y."/>
            <person name="Salzberg S.L."/>
            <person name="Sandelin A."/>
            <person name="Schneider C."/>
            <person name="Schoenbach C."/>
            <person name="Sekiguchi K."/>
            <person name="Semple C.A."/>
            <person name="Seno S."/>
            <person name="Sessa L."/>
            <person name="Sheng Y."/>
            <person name="Shibata Y."/>
            <person name="Shimada H."/>
            <person name="Shimada K."/>
            <person name="Silva D."/>
            <person name="Sinclair B."/>
            <person name="Sperling S."/>
            <person name="Stupka E."/>
            <person name="Sugiura K."/>
            <person name="Sultana R."/>
            <person name="Takenaka Y."/>
            <person name="Taki K."/>
            <person name="Tammoja K."/>
            <person name="Tan S.L."/>
            <person name="Tang S."/>
            <person name="Taylor M.S."/>
            <person name="Tegner J."/>
            <person name="Teichmann S.A."/>
            <person name="Ueda H.R."/>
            <person name="van Nimwegen E."/>
            <person name="Verardo R."/>
            <person name="Wei C.L."/>
            <person name="Yagi K."/>
            <person name="Yamanishi H."/>
            <person name="Zabarovsky E."/>
            <person name="Zhu S."/>
            <person name="Zimmer A."/>
            <person name="Hide W."/>
            <person name="Bult C."/>
            <person name="Grimmond S.M."/>
            <person name="Teasdale R.D."/>
            <person name="Liu E.T."/>
            <person name="Brusic V."/>
            <person name="Quackenbush J."/>
            <person name="Wahlestedt C."/>
            <person name="Mattick J.S."/>
            <person name="Hume D.A."/>
            <person name="Kai C."/>
            <person name="Sasaki D."/>
            <person name="Tomaru Y."/>
            <person name="Fukuda S."/>
            <person name="Kanamori-Katayama M."/>
            <person name="Suzuki M."/>
            <person name="Aoki J."/>
            <person name="Arakawa T."/>
            <person name="Iida J."/>
            <person name="Imamura K."/>
            <person name="Itoh M."/>
            <person name="Kato T."/>
            <person name="Kawaji H."/>
            <person name="Kawagashira N."/>
            <person name="Kawashima T."/>
            <person name="Kojima M."/>
            <person name="Kondo S."/>
            <person name="Konno H."/>
            <person name="Nakano K."/>
            <person name="Ninomiya N."/>
            <person name="Nishio T."/>
            <person name="Okada M."/>
            <person name="Plessy C."/>
            <person name="Shibata K."/>
            <person name="Shiraki T."/>
            <person name="Suzuki S."/>
            <person name="Tagami M."/>
            <person name="Waki K."/>
            <person name="Watahiki A."/>
            <person name="Okamura-Oho Y."/>
            <person name="Suzuki H."/>
            <person name="Kawai J."/>
            <person name="Hayashizaki Y."/>
        </authorList>
    </citation>
    <scope>NUCLEOTIDE SEQUENCE [LARGE SCALE MRNA] (ISOFORM 1)</scope>
    <source>
        <strain evidence="18">C57BL/6J</strain>
        <tissue evidence="18">Eye</tissue>
    </source>
</reference>
<reference key="3">
    <citation type="journal article" date="2004" name="Genome Res.">
        <title>The status, quality, and expansion of the NIH full-length cDNA project: the Mammalian Gene Collection (MGC).</title>
        <authorList>
            <consortium name="The MGC Project Team"/>
        </authorList>
    </citation>
    <scope>NUCLEOTIDE SEQUENCE [LARGE SCALE MRNA] (ISOFORMS 1 AND 2)</scope>
    <source>
        <tissue>Brain</tissue>
    </source>
</reference>
<reference evidence="16" key="4">
    <citation type="journal article" date="1998" name="FASEB J.">
        <title>The epithelium-specific ets transcription factor ESX is associated with mammary gland development and involution.</title>
        <authorList>
            <person name="Neve R."/>
            <person name="Chang C.-H."/>
            <person name="Scott G.K."/>
            <person name="Wong A."/>
            <person name="Friis R.R."/>
            <person name="Hynes N.E."/>
            <person name="Benz C.C."/>
        </authorList>
    </citation>
    <scope>FUNCTION</scope>
    <scope>DEVELOPMENTAL STAGE</scope>
    <scope>INDUCTION</scope>
</reference>
<reference evidence="16" key="5">
    <citation type="journal article" date="2000" name="Mech. Dev.">
        <title>Ets family transcription factor ESE-1 is expressed in corneal epithelial cells and is involved in their differentiation.</title>
        <authorList>
            <person name="Yoshida N."/>
            <person name="Yoshida S."/>
            <person name="Araie M."/>
            <person name="Handa H."/>
            <person name="Nabeshima Y."/>
        </authorList>
    </citation>
    <scope>TISSUE SPECIFICITY</scope>
    <scope>DEVELOPMENTAL STAGE</scope>
    <scope>INDUCTION</scope>
</reference>
<reference evidence="16" key="6">
    <citation type="journal article" date="2002" name="Gastroenterology">
        <title>Inactivation of the transcription factor Elf3 in mice results in dysmorphogenesis and altered differentiation of intestinal epithelium.</title>
        <authorList>
            <person name="Ng A.-Y.N."/>
            <person name="Waring P."/>
            <person name="Ristevski S."/>
            <person name="Wang C."/>
            <person name="Wilson T."/>
            <person name="Pritchard M."/>
            <person name="Hertzog P."/>
            <person name="Kola I."/>
        </authorList>
    </citation>
    <scope>FUNCTION</scope>
    <scope>DISRUPTION PHENOTYPE</scope>
</reference>
<reference evidence="16" key="7">
    <citation type="journal article" date="2002" name="J. Biol. Chem.">
        <title>Activation of the murine type II transforming growth factor-beta receptor gene: up-regulation and function of the transcription factor Elf-3/Ert/Esx/Ese-1.</title>
        <authorList>
            <person name="Kim J.-H."/>
            <person name="Wilder P.J."/>
            <person name="Hou J."/>
            <person name="Nowling T."/>
            <person name="Rizzino A."/>
        </authorList>
    </citation>
    <scope>FUNCTION</scope>
    <scope>MUTAGENESIS OF ASP-153 AND LEU-162</scope>
</reference>
<reference evidence="16" key="8">
    <citation type="journal article" date="2006" name="Biochem. Biophys. Res. Commun.">
        <title>The role of ETS transcription factors in transcription and development of mouse preimplantation embryos.</title>
        <authorList>
            <person name="Kageyama S."/>
            <person name="Liu H."/>
            <person name="Nagata M."/>
            <person name="Aoki F."/>
        </authorList>
    </citation>
    <scope>FUNCTION</scope>
</reference>
<reference evidence="16" key="9">
    <citation type="journal article" date="2006" name="FEBS Lett.">
        <title>Identification of multiple nuclear localization signals in murine Elf3, an ETS transcription factor.</title>
        <authorList>
            <person name="Do H.-J."/>
            <person name="Song H."/>
            <person name="Yang H.-M."/>
            <person name="Kim D.-K."/>
            <person name="Kim N.-H."/>
            <person name="Kim J.-H."/>
            <person name="Cha K.-Y."/>
            <person name="Chung H.-M."/>
            <person name="Kim J.-H."/>
        </authorList>
    </citation>
    <scope>SUBCELLULAR LOCATION</scope>
    <scope>MUTAGENESIS OF 264-LYS--ARG-267; 269-ARG--LYS-272 AND 338-LYS--LYS-340</scope>
</reference>
<keyword id="KW-0002">3D-structure</keyword>
<keyword id="KW-0010">Activator</keyword>
<keyword id="KW-0025">Alternative splicing</keyword>
<keyword id="KW-0963">Cytoplasm</keyword>
<keyword id="KW-0217">Developmental protein</keyword>
<keyword id="KW-0221">Differentiation</keyword>
<keyword id="KW-0238">DNA-binding</keyword>
<keyword id="KW-0395">Inflammatory response</keyword>
<keyword id="KW-0539">Nucleus</keyword>
<keyword id="KW-1185">Reference proteome</keyword>
<keyword id="KW-0678">Repressor</keyword>
<keyword id="KW-0804">Transcription</keyword>
<keyword id="KW-0805">Transcription regulation</keyword>
<proteinExistence type="evidence at protein level"/>
<sequence>MAATCEISNVFSNYFNAMYSSEDPTLAPAPPTTFGTEDLVLTLNNQQMTLEGPGPQTRSQRDRTDPLAVLHLAEKASWTSERPQFWSKTQVLEWISYQVEKNKYDASSIDFSRCDMDGATLCSCALEELRLVFGPLGDQLHAQLRDLTSNSSDELSWIIELLEKDGMSFQESLGDSGPFDQGSPFAQELLDDGRQASPYYCSTYGPGAPSPGSSDVSTARTATPQSSHASDSGGSDVDLDLTESKVFPRDGFPDYKKGEPKHGKRKRGRPRKLSKEYWDCLEGKKSKHAPRGTHLWEFIRDILIHPELNEGLMKWENRHEGVFKFLRSEAVAQLWGQKKKNSNMTYEKLSRAMRYYYKREILERVDGRRLVYKFGKNSSGWKEEEVGESRN</sequence>